<gene>
    <name evidence="1" type="primary">rpsG</name>
    <name type="ordered locus">NIS_0271</name>
</gene>
<feature type="chain" id="PRO_1000014245" description="Small ribosomal subunit protein uS7">
    <location>
        <begin position="1"/>
        <end position="156"/>
    </location>
</feature>
<organism>
    <name type="scientific">Nitratiruptor sp. (strain SB155-2)</name>
    <dbReference type="NCBI Taxonomy" id="387092"/>
    <lineage>
        <taxon>Bacteria</taxon>
        <taxon>Pseudomonadati</taxon>
        <taxon>Campylobacterota</taxon>
        <taxon>Epsilonproteobacteria</taxon>
        <taxon>Nautiliales</taxon>
        <taxon>Nitratiruptoraceae</taxon>
        <taxon>Nitratiruptor</taxon>
    </lineage>
</organism>
<sequence length="156" mass="18137">MRRRRAPIREVMPDPIYGSKVVTKFINKLMWDGKKSTAQKIFYNALKLIEEKDKEAKGIDIFNEAIENVKPLLEVKSRRVGGATYQVPVEVRPVRQQSLAIRWIVDAARNRNERTMAERLANELLDAANKRGAAYKKKEDTYKMAEANKAFAHYRW</sequence>
<evidence type="ECO:0000255" key="1">
    <source>
        <dbReference type="HAMAP-Rule" id="MF_00480"/>
    </source>
</evidence>
<evidence type="ECO:0000305" key="2"/>
<comment type="function">
    <text evidence="1">One of the primary rRNA binding proteins, it binds directly to 16S rRNA where it nucleates assembly of the head domain of the 30S subunit. Is located at the subunit interface close to the decoding center, probably blocks exit of the E-site tRNA.</text>
</comment>
<comment type="subunit">
    <text evidence="1">Part of the 30S ribosomal subunit. Contacts proteins S9 and S11.</text>
</comment>
<comment type="similarity">
    <text evidence="1">Belongs to the universal ribosomal protein uS7 family.</text>
</comment>
<keyword id="KW-1185">Reference proteome</keyword>
<keyword id="KW-0687">Ribonucleoprotein</keyword>
<keyword id="KW-0689">Ribosomal protein</keyword>
<keyword id="KW-0694">RNA-binding</keyword>
<keyword id="KW-0699">rRNA-binding</keyword>
<keyword id="KW-0820">tRNA-binding</keyword>
<proteinExistence type="inferred from homology"/>
<protein>
    <recommendedName>
        <fullName evidence="1">Small ribosomal subunit protein uS7</fullName>
    </recommendedName>
    <alternativeName>
        <fullName evidence="2">30S ribosomal protein S7</fullName>
    </alternativeName>
</protein>
<reference key="1">
    <citation type="journal article" date="2007" name="Proc. Natl. Acad. Sci. U.S.A.">
        <title>Deep-sea vent epsilon-proteobacterial genomes provide insights into emergence of pathogens.</title>
        <authorList>
            <person name="Nakagawa S."/>
            <person name="Takaki Y."/>
            <person name="Shimamura S."/>
            <person name="Reysenbach A.-L."/>
            <person name="Takai K."/>
            <person name="Horikoshi K."/>
        </authorList>
    </citation>
    <scope>NUCLEOTIDE SEQUENCE [LARGE SCALE GENOMIC DNA]</scope>
    <source>
        <strain>SB155-2</strain>
    </source>
</reference>
<dbReference type="EMBL" id="AP009178">
    <property type="protein sequence ID" value="BAF69385.1"/>
    <property type="molecule type" value="Genomic_DNA"/>
</dbReference>
<dbReference type="RefSeq" id="WP_012081648.1">
    <property type="nucleotide sequence ID" value="NC_009662.1"/>
</dbReference>
<dbReference type="SMR" id="A6Q1M6"/>
<dbReference type="FunCoup" id="A6Q1M6">
    <property type="interactions" value="528"/>
</dbReference>
<dbReference type="STRING" id="387092.NIS_0271"/>
<dbReference type="KEGG" id="nis:NIS_0271"/>
<dbReference type="eggNOG" id="COG0049">
    <property type="taxonomic scope" value="Bacteria"/>
</dbReference>
<dbReference type="HOGENOM" id="CLU_072226_1_1_7"/>
<dbReference type="InParanoid" id="A6Q1M6"/>
<dbReference type="OrthoDB" id="9807653at2"/>
<dbReference type="Proteomes" id="UP000001118">
    <property type="component" value="Chromosome"/>
</dbReference>
<dbReference type="GO" id="GO:0015935">
    <property type="term" value="C:small ribosomal subunit"/>
    <property type="evidence" value="ECO:0007669"/>
    <property type="project" value="InterPro"/>
</dbReference>
<dbReference type="GO" id="GO:0019843">
    <property type="term" value="F:rRNA binding"/>
    <property type="evidence" value="ECO:0007669"/>
    <property type="project" value="UniProtKB-UniRule"/>
</dbReference>
<dbReference type="GO" id="GO:0003735">
    <property type="term" value="F:structural constituent of ribosome"/>
    <property type="evidence" value="ECO:0007669"/>
    <property type="project" value="InterPro"/>
</dbReference>
<dbReference type="GO" id="GO:0000049">
    <property type="term" value="F:tRNA binding"/>
    <property type="evidence" value="ECO:0007669"/>
    <property type="project" value="UniProtKB-UniRule"/>
</dbReference>
<dbReference type="GO" id="GO:0006412">
    <property type="term" value="P:translation"/>
    <property type="evidence" value="ECO:0007669"/>
    <property type="project" value="UniProtKB-UniRule"/>
</dbReference>
<dbReference type="CDD" id="cd14869">
    <property type="entry name" value="uS7_Bacteria"/>
    <property type="match status" value="1"/>
</dbReference>
<dbReference type="FunFam" id="1.10.455.10:FF:000001">
    <property type="entry name" value="30S ribosomal protein S7"/>
    <property type="match status" value="1"/>
</dbReference>
<dbReference type="Gene3D" id="1.10.455.10">
    <property type="entry name" value="Ribosomal protein S7 domain"/>
    <property type="match status" value="1"/>
</dbReference>
<dbReference type="HAMAP" id="MF_00480_B">
    <property type="entry name" value="Ribosomal_uS7_B"/>
    <property type="match status" value="1"/>
</dbReference>
<dbReference type="InterPro" id="IPR000235">
    <property type="entry name" value="Ribosomal_uS7"/>
</dbReference>
<dbReference type="InterPro" id="IPR005717">
    <property type="entry name" value="Ribosomal_uS7_bac/org-type"/>
</dbReference>
<dbReference type="InterPro" id="IPR020606">
    <property type="entry name" value="Ribosomal_uS7_CS"/>
</dbReference>
<dbReference type="InterPro" id="IPR023798">
    <property type="entry name" value="Ribosomal_uS7_dom"/>
</dbReference>
<dbReference type="InterPro" id="IPR036823">
    <property type="entry name" value="Ribosomal_uS7_dom_sf"/>
</dbReference>
<dbReference type="NCBIfam" id="TIGR01029">
    <property type="entry name" value="rpsG_bact"/>
    <property type="match status" value="1"/>
</dbReference>
<dbReference type="PANTHER" id="PTHR11205">
    <property type="entry name" value="RIBOSOMAL PROTEIN S7"/>
    <property type="match status" value="1"/>
</dbReference>
<dbReference type="Pfam" id="PF00177">
    <property type="entry name" value="Ribosomal_S7"/>
    <property type="match status" value="1"/>
</dbReference>
<dbReference type="PIRSF" id="PIRSF002122">
    <property type="entry name" value="RPS7p_RPS7a_RPS5e_RPS7o"/>
    <property type="match status" value="1"/>
</dbReference>
<dbReference type="SUPFAM" id="SSF47973">
    <property type="entry name" value="Ribosomal protein S7"/>
    <property type="match status" value="1"/>
</dbReference>
<dbReference type="PROSITE" id="PS00052">
    <property type="entry name" value="RIBOSOMAL_S7"/>
    <property type="match status" value="1"/>
</dbReference>
<accession>A6Q1M6</accession>
<name>RS7_NITSB</name>